<proteinExistence type="inferred from homology"/>
<sequence length="165" mass="18058">MATLLFDDGREATAAEIEAIARAHRIVVEHRPVPAALAETLARPLLDDTAAATVLDALPPRPEFPSRDLIVLHPERPDNEQLATKFENWHRHAGDEIRHILDGAGIFGVIVDGQRADLHVGPGDFIVVPAGLEHNFRLTAARRIKAVRYLSDAEGWSAEFTGRAA</sequence>
<gene>
    <name evidence="1" type="primary">mtnD</name>
    <name type="ordered locus">Rpal_2596</name>
</gene>
<name>MTND_RHOPT</name>
<organism>
    <name type="scientific">Rhodopseudomonas palustris (strain TIE-1)</name>
    <dbReference type="NCBI Taxonomy" id="395960"/>
    <lineage>
        <taxon>Bacteria</taxon>
        <taxon>Pseudomonadati</taxon>
        <taxon>Pseudomonadota</taxon>
        <taxon>Alphaproteobacteria</taxon>
        <taxon>Hyphomicrobiales</taxon>
        <taxon>Nitrobacteraceae</taxon>
        <taxon>Rhodopseudomonas</taxon>
    </lineage>
</organism>
<protein>
    <recommendedName>
        <fullName evidence="1">Acireductone dioxygenase</fullName>
    </recommendedName>
    <alternativeName>
        <fullName evidence="1">1,2-dihydroxy-3-keto-5-methylthiopentene dioxygenase</fullName>
        <shortName evidence="1">DHK-MTPene dioxygenase</shortName>
    </alternativeName>
    <alternativeName>
        <fullName evidence="1">Acireductone dioxygenase (Fe(2+)-requiring)</fullName>
        <shortName evidence="1">ARD'</shortName>
        <shortName evidence="1">Fe-ARD</shortName>
        <ecNumber evidence="1">1.13.11.54</ecNumber>
    </alternativeName>
    <alternativeName>
        <fullName evidence="1">Acireductone dioxygenase (Ni(2+)-requiring)</fullName>
        <shortName evidence="1">ARD</shortName>
        <shortName evidence="1">Ni-ARD</shortName>
        <ecNumber evidence="1">1.13.11.53</ecNumber>
    </alternativeName>
</protein>
<evidence type="ECO:0000255" key="1">
    <source>
        <dbReference type="HAMAP-Rule" id="MF_01682"/>
    </source>
</evidence>
<dbReference type="EC" id="1.13.11.54" evidence="1"/>
<dbReference type="EC" id="1.13.11.53" evidence="1"/>
<dbReference type="EMBL" id="CP001096">
    <property type="protein sequence ID" value="ACF01109.1"/>
    <property type="molecule type" value="Genomic_DNA"/>
</dbReference>
<dbReference type="RefSeq" id="WP_012495828.1">
    <property type="nucleotide sequence ID" value="NC_011004.1"/>
</dbReference>
<dbReference type="SMR" id="B3QG72"/>
<dbReference type="KEGG" id="rpt:Rpal_2596"/>
<dbReference type="HOGENOM" id="CLU_125400_0_0_5"/>
<dbReference type="OrthoDB" id="9794183at2"/>
<dbReference type="UniPathway" id="UPA00904">
    <property type="reaction ID" value="UER00878"/>
</dbReference>
<dbReference type="Proteomes" id="UP000001725">
    <property type="component" value="Chromosome"/>
</dbReference>
<dbReference type="GO" id="GO:0010308">
    <property type="term" value="F:acireductone dioxygenase (Ni2+-requiring) activity"/>
    <property type="evidence" value="ECO:0007669"/>
    <property type="project" value="UniProtKB-UniRule"/>
</dbReference>
<dbReference type="GO" id="GO:0010309">
    <property type="term" value="F:acireductone dioxygenase [iron(II)-requiring] activity"/>
    <property type="evidence" value="ECO:0007669"/>
    <property type="project" value="UniProtKB-UniRule"/>
</dbReference>
<dbReference type="GO" id="GO:0005506">
    <property type="term" value="F:iron ion binding"/>
    <property type="evidence" value="ECO:0007669"/>
    <property type="project" value="UniProtKB-UniRule"/>
</dbReference>
<dbReference type="GO" id="GO:0016151">
    <property type="term" value="F:nickel cation binding"/>
    <property type="evidence" value="ECO:0007669"/>
    <property type="project" value="UniProtKB-UniRule"/>
</dbReference>
<dbReference type="GO" id="GO:0019509">
    <property type="term" value="P:L-methionine salvage from methylthioadenosine"/>
    <property type="evidence" value="ECO:0007669"/>
    <property type="project" value="UniProtKB-UniRule"/>
</dbReference>
<dbReference type="GO" id="GO:0019284">
    <property type="term" value="P:L-methionine salvage from S-adenosylmethionine"/>
    <property type="evidence" value="ECO:0007669"/>
    <property type="project" value="InterPro"/>
</dbReference>
<dbReference type="CDD" id="cd02232">
    <property type="entry name" value="cupin_ARD"/>
    <property type="match status" value="1"/>
</dbReference>
<dbReference type="Gene3D" id="2.60.120.10">
    <property type="entry name" value="Jelly Rolls"/>
    <property type="match status" value="1"/>
</dbReference>
<dbReference type="HAMAP" id="MF_01682">
    <property type="entry name" value="Salvage_MtnD"/>
    <property type="match status" value="1"/>
</dbReference>
<dbReference type="InterPro" id="IPR004313">
    <property type="entry name" value="ARD"/>
</dbReference>
<dbReference type="InterPro" id="IPR023956">
    <property type="entry name" value="ARD_bac"/>
</dbReference>
<dbReference type="InterPro" id="IPR014710">
    <property type="entry name" value="RmlC-like_jellyroll"/>
</dbReference>
<dbReference type="InterPro" id="IPR011051">
    <property type="entry name" value="RmlC_Cupin_sf"/>
</dbReference>
<dbReference type="PANTHER" id="PTHR23418">
    <property type="entry name" value="ACIREDUCTONE DIOXYGENASE"/>
    <property type="match status" value="1"/>
</dbReference>
<dbReference type="PANTHER" id="PTHR23418:SF0">
    <property type="entry name" value="ACIREDUCTONE DIOXYGENASE"/>
    <property type="match status" value="1"/>
</dbReference>
<dbReference type="Pfam" id="PF03079">
    <property type="entry name" value="ARD"/>
    <property type="match status" value="1"/>
</dbReference>
<dbReference type="SUPFAM" id="SSF51182">
    <property type="entry name" value="RmlC-like cupins"/>
    <property type="match status" value="1"/>
</dbReference>
<feature type="chain" id="PRO_0000359227" description="Acireductone dioxygenase">
    <location>
        <begin position="1"/>
        <end position="165"/>
    </location>
</feature>
<feature type="binding site" evidence="1">
    <location>
        <position position="90"/>
    </location>
    <ligand>
        <name>Fe(2+)</name>
        <dbReference type="ChEBI" id="CHEBI:29033"/>
    </ligand>
</feature>
<feature type="binding site" evidence="1">
    <location>
        <position position="90"/>
    </location>
    <ligand>
        <name>Ni(2+)</name>
        <dbReference type="ChEBI" id="CHEBI:49786"/>
    </ligand>
</feature>
<feature type="binding site" evidence="1">
    <location>
        <position position="92"/>
    </location>
    <ligand>
        <name>Fe(2+)</name>
        <dbReference type="ChEBI" id="CHEBI:29033"/>
    </ligand>
</feature>
<feature type="binding site" evidence="1">
    <location>
        <position position="92"/>
    </location>
    <ligand>
        <name>Ni(2+)</name>
        <dbReference type="ChEBI" id="CHEBI:49786"/>
    </ligand>
</feature>
<feature type="binding site" evidence="1">
    <location>
        <position position="96"/>
    </location>
    <ligand>
        <name>Fe(2+)</name>
        <dbReference type="ChEBI" id="CHEBI:29033"/>
    </ligand>
</feature>
<feature type="binding site" evidence="1">
    <location>
        <position position="96"/>
    </location>
    <ligand>
        <name>Ni(2+)</name>
        <dbReference type="ChEBI" id="CHEBI:49786"/>
    </ligand>
</feature>
<feature type="binding site" evidence="1">
    <location>
        <position position="134"/>
    </location>
    <ligand>
        <name>Fe(2+)</name>
        <dbReference type="ChEBI" id="CHEBI:29033"/>
    </ligand>
</feature>
<feature type="binding site" evidence="1">
    <location>
        <position position="134"/>
    </location>
    <ligand>
        <name>Ni(2+)</name>
        <dbReference type="ChEBI" id="CHEBI:49786"/>
    </ligand>
</feature>
<feature type="site" description="May play a role in transmitting local conformational changes" evidence="1">
    <location>
        <position position="95"/>
    </location>
</feature>
<feature type="site" description="Important to generate the dianion" evidence="1">
    <location>
        <position position="98"/>
    </location>
</feature>
<accession>B3QG72</accession>
<comment type="function">
    <text evidence="1">Catalyzes 2 different reactions between oxygen and the acireductone 1,2-dihydroxy-3-keto-5-methylthiopentene (DHK-MTPene) depending upon the metal bound in the active site. Fe-containing acireductone dioxygenase (Fe-ARD) produces formate and 2-keto-4-methylthiobutyrate (KMTB), the alpha-ketoacid precursor of methionine in the methionine recycle pathway. Ni-containing acireductone dioxygenase (Ni-ARD) produces methylthiopropionate, carbon monoxide and formate, and does not lie on the methionine recycle pathway.</text>
</comment>
<comment type="catalytic activity">
    <reaction evidence="1">
        <text>1,2-dihydroxy-5-(methylsulfanyl)pent-1-en-3-one + O2 = 3-(methylsulfanyl)propanoate + CO + formate + 2 H(+)</text>
        <dbReference type="Rhea" id="RHEA:14161"/>
        <dbReference type="ChEBI" id="CHEBI:15378"/>
        <dbReference type="ChEBI" id="CHEBI:15379"/>
        <dbReference type="ChEBI" id="CHEBI:15740"/>
        <dbReference type="ChEBI" id="CHEBI:17245"/>
        <dbReference type="ChEBI" id="CHEBI:49016"/>
        <dbReference type="ChEBI" id="CHEBI:49252"/>
        <dbReference type="EC" id="1.13.11.53"/>
    </reaction>
</comment>
<comment type="catalytic activity">
    <reaction evidence="1">
        <text>1,2-dihydroxy-5-(methylsulfanyl)pent-1-en-3-one + O2 = 4-methylsulfanyl-2-oxobutanoate + formate + 2 H(+)</text>
        <dbReference type="Rhea" id="RHEA:24504"/>
        <dbReference type="ChEBI" id="CHEBI:15378"/>
        <dbReference type="ChEBI" id="CHEBI:15379"/>
        <dbReference type="ChEBI" id="CHEBI:15740"/>
        <dbReference type="ChEBI" id="CHEBI:16723"/>
        <dbReference type="ChEBI" id="CHEBI:49252"/>
        <dbReference type="EC" id="1.13.11.54"/>
    </reaction>
</comment>
<comment type="cofactor">
    <cofactor evidence="1">
        <name>Fe(2+)</name>
        <dbReference type="ChEBI" id="CHEBI:29033"/>
    </cofactor>
    <text evidence="1">Binds 1 Fe(2+) cation per monomer.</text>
</comment>
<comment type="cofactor">
    <cofactor evidence="1">
        <name>Ni(2+)</name>
        <dbReference type="ChEBI" id="CHEBI:49786"/>
    </cofactor>
    <text evidence="1">Binds 1 nickel ion per monomer.</text>
</comment>
<comment type="pathway">
    <text evidence="1">Amino-acid biosynthesis; L-methionine biosynthesis via salvage pathway; L-methionine from S-methyl-5-thio-alpha-D-ribose 1-phosphate: step 5/6.</text>
</comment>
<comment type="subunit">
    <text evidence="1">Monomer.</text>
</comment>
<comment type="similarity">
    <text evidence="1">Belongs to the acireductone dioxygenase (ARD) family.</text>
</comment>
<keyword id="KW-0028">Amino-acid biosynthesis</keyword>
<keyword id="KW-0223">Dioxygenase</keyword>
<keyword id="KW-0408">Iron</keyword>
<keyword id="KW-0479">Metal-binding</keyword>
<keyword id="KW-0486">Methionine biosynthesis</keyword>
<keyword id="KW-0533">Nickel</keyword>
<keyword id="KW-0560">Oxidoreductase</keyword>
<reference key="1">
    <citation type="submission" date="2008-05" db="EMBL/GenBank/DDBJ databases">
        <title>Complete sequence of Rhodopseudomonas palustris TIE-1.</title>
        <authorList>
            <consortium name="US DOE Joint Genome Institute"/>
            <person name="Lucas S."/>
            <person name="Copeland A."/>
            <person name="Lapidus A."/>
            <person name="Glavina del Rio T."/>
            <person name="Dalin E."/>
            <person name="Tice H."/>
            <person name="Pitluck S."/>
            <person name="Chain P."/>
            <person name="Malfatti S."/>
            <person name="Shin M."/>
            <person name="Vergez L."/>
            <person name="Lang D."/>
            <person name="Schmutz J."/>
            <person name="Larimer F."/>
            <person name="Land M."/>
            <person name="Hauser L."/>
            <person name="Kyrpides N."/>
            <person name="Mikhailova N."/>
            <person name="Emerson D."/>
            <person name="Newman D.K."/>
            <person name="Roden E."/>
            <person name="Richardson P."/>
        </authorList>
    </citation>
    <scope>NUCLEOTIDE SEQUENCE [LARGE SCALE GENOMIC DNA]</scope>
    <source>
        <strain>TIE-1</strain>
    </source>
</reference>